<organismHost>
    <name type="scientific">Orgyia pseudotsugata</name>
    <name type="common">Douglas-fir tussock moth</name>
    <dbReference type="NCBI Taxonomy" id="33414"/>
</organismHost>
<sequence length="163" mass="18896">MMIQSVHAKRLEFDNVILDLSHLQLHGPPEERYIVFLNVKRAFYKNFCVECDMSLETFALHLYETARLTVDGAVVPRAPEFAHHISFNSADRDQSLVLDLGPDARIVVAKQLRADERYHQRASGFLDFQRRHERPPAPIEHDLVARNALDRELEIKLYTLCES</sequence>
<proteinExistence type="predicted"/>
<name>Y057_NPVOP</name>
<protein>
    <recommendedName>
        <fullName>Uncharacterized 18.9 kDa protein</fullName>
    </recommendedName>
</protein>
<organism>
    <name type="scientific">Orgyia pseudotsugata multicapsid polyhedrosis virus</name>
    <name type="common">OpMNPV</name>
    <dbReference type="NCBI Taxonomy" id="262177"/>
    <lineage>
        <taxon>Viruses</taxon>
        <taxon>Viruses incertae sedis</taxon>
        <taxon>Naldaviricetes</taxon>
        <taxon>Lefavirales</taxon>
        <taxon>Baculoviridae</taxon>
        <taxon>Alphabaculovirus</taxon>
        <taxon>Alphabaculovirus orpseudotsugatae</taxon>
    </lineage>
</organism>
<reference key="1">
    <citation type="journal article" date="1997" name="Virology">
        <title>The sequence of the Orgyia pseudotsugata multinucleocapsid nuclear polyhedrosis virus genome.</title>
        <authorList>
            <person name="Ahrens C.H."/>
            <person name="Russell R.R."/>
            <person name="Funk C.J."/>
            <person name="Evans J."/>
            <person name="Harwood S."/>
            <person name="Rohrmann G.F."/>
        </authorList>
    </citation>
    <scope>NUCLEOTIDE SEQUENCE [LARGE SCALE GENOMIC DNA]</scope>
</reference>
<keyword id="KW-1185">Reference proteome</keyword>
<accession>O10315</accession>
<dbReference type="EMBL" id="U75930">
    <property type="protein sequence ID" value="AAC59060.1"/>
    <property type="molecule type" value="Genomic_DNA"/>
</dbReference>
<dbReference type="RefSeq" id="NP_046217.1">
    <property type="nucleotide sequence ID" value="NC_001875.2"/>
</dbReference>
<dbReference type="KEGG" id="vg:911998"/>
<dbReference type="OrthoDB" id="19330at10239"/>
<dbReference type="Proteomes" id="UP000009248">
    <property type="component" value="Genome"/>
</dbReference>
<dbReference type="InterPro" id="IPR009264">
    <property type="entry name" value="AcMNPV_Orf57"/>
</dbReference>
<dbReference type="Pfam" id="PF06033">
    <property type="entry name" value="DUF918"/>
    <property type="match status" value="1"/>
</dbReference>
<gene>
    <name type="ORF">ORF61</name>
</gene>
<feature type="chain" id="PRO_0000132994" description="Uncharacterized 18.9 kDa protein">
    <location>
        <begin position="1"/>
        <end position="163"/>
    </location>
</feature>